<gene>
    <name type="ORF">ORF14</name>
</gene>
<comment type="cofactor">
    <cofactor evidence="1">
        <name>Zn(2+)</name>
        <dbReference type="ChEBI" id="CHEBI:29105"/>
    </cofactor>
    <text evidence="1">Binds 1 zinc ion per subunit.</text>
</comment>
<comment type="similarity">
    <text evidence="5">Belongs to the peptidase M10A family.</text>
</comment>
<name>MMP_SFAVA</name>
<proteinExistence type="inferred from homology"/>
<feature type="signal peptide" evidence="2">
    <location>
        <begin position="1"/>
        <end position="34"/>
    </location>
</feature>
<feature type="chain" id="PRO_0000330607" description="Putative matrix metalloproteinase">
    <location>
        <begin position="35"/>
        <end position="386"/>
    </location>
</feature>
<feature type="region of interest" description="Disordered" evidence="4">
    <location>
        <begin position="235"/>
        <end position="258"/>
    </location>
</feature>
<feature type="active site" evidence="3">
    <location>
        <position position="187"/>
    </location>
</feature>
<feature type="binding site" evidence="3">
    <location>
        <position position="186"/>
    </location>
    <ligand>
        <name>Zn(2+)</name>
        <dbReference type="ChEBI" id="CHEBI:29105"/>
        <note>catalytic</note>
    </ligand>
</feature>
<feature type="binding site" evidence="3">
    <location>
        <position position="190"/>
    </location>
    <ligand>
        <name>Zn(2+)</name>
        <dbReference type="ChEBI" id="CHEBI:29105"/>
        <note>catalytic</note>
    </ligand>
</feature>
<feature type="binding site" evidence="3">
    <location>
        <position position="196"/>
    </location>
    <ligand>
        <name>Zn(2+)</name>
        <dbReference type="ChEBI" id="CHEBI:29105"/>
        <note>catalytic</note>
    </ligand>
</feature>
<feature type="glycosylation site" description="N-linked (GlcNAc...) asparagine; by host" evidence="2">
    <location>
        <position position="14"/>
    </location>
</feature>
<feature type="glycosylation site" description="N-linked (GlcNAc...) asparagine; by host" evidence="2">
    <location>
        <position position="58"/>
    </location>
</feature>
<sequence>MPTAHFQHSIRYLNVTNMLIFSIISFLLIYQTNSVVTLSRIDPAGAVDMGFVDVSYNNFTIQSPIHVPDDGTITWCVSKINCKYDYDEVVGVTAAAFDVWSMTGLVFKPTSRCDRAHIRISFKRRYHGDSDFDGEGGLLAHAFLPNQGALSGDIHMDNDETFAFSFNDADYEGDNAPTSYFWTVLHEIGHTLGLQHSSSKQAIMYGFYVKRSFNNGAVTLSTDDMNGINELYHSNEQSTHQSTRHRPHRRPSPDGSCRDERVLRIRRCRRRDRRRRRPKESGELVLCRSVRCHRVHSRRADHLRRQLHMETRSKRTALRRLSIANDDCVGFTTRFRGYIGVRMDGVHRSRHRQRSASVRRNSLPAQCNFRTKRHLSRSLTTTLCTR</sequence>
<reference key="1">
    <citation type="journal article" date="2006" name="J. Virol.">
        <title>Genomic sequence of Spodoptera frugiperda Ascovirus 1a, an enveloped, double-stranded DNA insect virus that manipulates apoptosis for viral reproduction.</title>
        <authorList>
            <person name="Bideshi D.K."/>
            <person name="Demattei M.V."/>
            <person name="Rouleux-Bonnin F."/>
            <person name="Stasiak K."/>
            <person name="Tan Y."/>
            <person name="Bigot S."/>
            <person name="Bigot Y."/>
            <person name="Federici B.A."/>
        </authorList>
    </citation>
    <scope>NUCLEOTIDE SEQUENCE [LARGE SCALE GENOMIC DNA]</scope>
</reference>
<organismHost>
    <name type="scientific">Spodoptera frugiperda</name>
    <name type="common">Fall armyworm</name>
    <dbReference type="NCBI Taxonomy" id="7108"/>
</organismHost>
<accession>Q0E587</accession>
<organism>
    <name type="scientific">Spodoptera frugiperda ascovirus 1a</name>
    <name type="common">SfAV-1a</name>
    <dbReference type="NCBI Taxonomy" id="113370"/>
    <lineage>
        <taxon>Viruses</taxon>
        <taxon>Varidnaviria</taxon>
        <taxon>Bamfordvirae</taxon>
        <taxon>Nucleocytoviricota</taxon>
        <taxon>Megaviricetes</taxon>
        <taxon>Pimascovirales</taxon>
        <taxon>Ascoviridae</taxon>
        <taxon>Ascovirus</taxon>
        <taxon>Ascovirus sfav1a</taxon>
    </lineage>
</organism>
<dbReference type="EC" id="3.4.24.-"/>
<dbReference type="EMBL" id="AM398843">
    <property type="protein sequence ID" value="CAL44614.1"/>
    <property type="molecule type" value="Genomic_DNA"/>
</dbReference>
<dbReference type="SMR" id="Q0E587"/>
<dbReference type="KEGG" id="vg:4306181"/>
<dbReference type="OrthoDB" id="4353at10239"/>
<dbReference type="Proteomes" id="UP000008030">
    <property type="component" value="Genome"/>
</dbReference>
<dbReference type="GO" id="GO:0004222">
    <property type="term" value="F:metalloendopeptidase activity"/>
    <property type="evidence" value="ECO:0007669"/>
    <property type="project" value="InterPro"/>
</dbReference>
<dbReference type="GO" id="GO:0008270">
    <property type="term" value="F:zinc ion binding"/>
    <property type="evidence" value="ECO:0007669"/>
    <property type="project" value="InterPro"/>
</dbReference>
<dbReference type="GO" id="GO:0030574">
    <property type="term" value="P:collagen catabolic process"/>
    <property type="evidence" value="ECO:0007669"/>
    <property type="project" value="TreeGrafter"/>
</dbReference>
<dbReference type="GO" id="GO:0030198">
    <property type="term" value="P:extracellular matrix organization"/>
    <property type="evidence" value="ECO:0007669"/>
    <property type="project" value="TreeGrafter"/>
</dbReference>
<dbReference type="GO" id="GO:0006508">
    <property type="term" value="P:proteolysis"/>
    <property type="evidence" value="ECO:0007669"/>
    <property type="project" value="UniProtKB-KW"/>
</dbReference>
<dbReference type="Gene3D" id="3.40.390.10">
    <property type="entry name" value="Collagenase (Catalytic Domain)"/>
    <property type="match status" value="1"/>
</dbReference>
<dbReference type="InterPro" id="IPR024079">
    <property type="entry name" value="MetalloPept_cat_dom_sf"/>
</dbReference>
<dbReference type="InterPro" id="IPR001818">
    <property type="entry name" value="Pept_M10_metallopeptidase"/>
</dbReference>
<dbReference type="InterPro" id="IPR021190">
    <property type="entry name" value="Pept_M10A"/>
</dbReference>
<dbReference type="InterPro" id="IPR006026">
    <property type="entry name" value="Peptidase_Metallo"/>
</dbReference>
<dbReference type="PANTHER" id="PTHR10201">
    <property type="entry name" value="MATRIX METALLOPROTEINASE"/>
    <property type="match status" value="1"/>
</dbReference>
<dbReference type="PANTHER" id="PTHR10201:SF323">
    <property type="entry name" value="MATRIX METALLOPROTEINASE-21"/>
    <property type="match status" value="1"/>
</dbReference>
<dbReference type="Pfam" id="PF00413">
    <property type="entry name" value="Peptidase_M10"/>
    <property type="match status" value="1"/>
</dbReference>
<dbReference type="PRINTS" id="PR00138">
    <property type="entry name" value="MATRIXIN"/>
</dbReference>
<dbReference type="SMART" id="SM00235">
    <property type="entry name" value="ZnMc"/>
    <property type="match status" value="1"/>
</dbReference>
<dbReference type="SUPFAM" id="SSF55486">
    <property type="entry name" value="Metalloproteases ('zincins'), catalytic domain"/>
    <property type="match status" value="1"/>
</dbReference>
<dbReference type="PROSITE" id="PS00142">
    <property type="entry name" value="ZINC_PROTEASE"/>
    <property type="match status" value="1"/>
</dbReference>
<keyword id="KW-0325">Glycoprotein</keyword>
<keyword id="KW-0378">Hydrolase</keyword>
<keyword id="KW-0479">Metal-binding</keyword>
<keyword id="KW-0482">Metalloprotease</keyword>
<keyword id="KW-0645">Protease</keyword>
<keyword id="KW-1185">Reference proteome</keyword>
<keyword id="KW-0732">Signal</keyword>
<keyword id="KW-0862">Zinc</keyword>
<evidence type="ECO:0000250" key="1"/>
<evidence type="ECO:0000255" key="2"/>
<evidence type="ECO:0000255" key="3">
    <source>
        <dbReference type="PROSITE-ProRule" id="PRU10095"/>
    </source>
</evidence>
<evidence type="ECO:0000256" key="4">
    <source>
        <dbReference type="SAM" id="MobiDB-lite"/>
    </source>
</evidence>
<evidence type="ECO:0000305" key="5"/>
<protein>
    <recommendedName>
        <fullName>Putative matrix metalloproteinase</fullName>
        <ecNumber>3.4.24.-</ecNumber>
    </recommendedName>
</protein>